<gene>
    <name evidence="1" type="primary">gpsA</name>
    <name type="ordered locus">BPSL0447</name>
</gene>
<reference key="1">
    <citation type="journal article" date="2004" name="Proc. Natl. Acad. Sci. U.S.A.">
        <title>Genomic plasticity of the causative agent of melioidosis, Burkholderia pseudomallei.</title>
        <authorList>
            <person name="Holden M.T.G."/>
            <person name="Titball R.W."/>
            <person name="Peacock S.J."/>
            <person name="Cerdeno-Tarraga A.-M."/>
            <person name="Atkins T."/>
            <person name="Crossman L.C."/>
            <person name="Pitt T."/>
            <person name="Churcher C."/>
            <person name="Mungall K.L."/>
            <person name="Bentley S.D."/>
            <person name="Sebaihia M."/>
            <person name="Thomson N.R."/>
            <person name="Bason N."/>
            <person name="Beacham I.R."/>
            <person name="Brooks K."/>
            <person name="Brown K.A."/>
            <person name="Brown N.F."/>
            <person name="Challis G.L."/>
            <person name="Cherevach I."/>
            <person name="Chillingworth T."/>
            <person name="Cronin A."/>
            <person name="Crossett B."/>
            <person name="Davis P."/>
            <person name="DeShazer D."/>
            <person name="Feltwell T."/>
            <person name="Fraser A."/>
            <person name="Hance Z."/>
            <person name="Hauser H."/>
            <person name="Holroyd S."/>
            <person name="Jagels K."/>
            <person name="Keith K.E."/>
            <person name="Maddison M."/>
            <person name="Moule S."/>
            <person name="Price C."/>
            <person name="Quail M.A."/>
            <person name="Rabbinowitsch E."/>
            <person name="Rutherford K."/>
            <person name="Sanders M."/>
            <person name="Simmonds M."/>
            <person name="Songsivilai S."/>
            <person name="Stevens K."/>
            <person name="Tumapa S."/>
            <person name="Vesaratchavest M."/>
            <person name="Whitehead S."/>
            <person name="Yeats C."/>
            <person name="Barrell B.G."/>
            <person name="Oyston P.C.F."/>
            <person name="Parkhill J."/>
        </authorList>
    </citation>
    <scope>NUCLEOTIDE SEQUENCE [LARGE SCALE GENOMIC DNA]</scope>
    <source>
        <strain>K96243</strain>
    </source>
</reference>
<keyword id="KW-0963">Cytoplasm</keyword>
<keyword id="KW-0444">Lipid biosynthesis</keyword>
<keyword id="KW-0443">Lipid metabolism</keyword>
<keyword id="KW-0520">NAD</keyword>
<keyword id="KW-0521">NADP</keyword>
<keyword id="KW-0547">Nucleotide-binding</keyword>
<keyword id="KW-0560">Oxidoreductase</keyword>
<keyword id="KW-0594">Phospholipid biosynthesis</keyword>
<keyword id="KW-1208">Phospholipid metabolism</keyword>
<keyword id="KW-1185">Reference proteome</keyword>
<organism>
    <name type="scientific">Burkholderia pseudomallei (strain K96243)</name>
    <dbReference type="NCBI Taxonomy" id="272560"/>
    <lineage>
        <taxon>Bacteria</taxon>
        <taxon>Pseudomonadati</taxon>
        <taxon>Pseudomonadota</taxon>
        <taxon>Betaproteobacteria</taxon>
        <taxon>Burkholderiales</taxon>
        <taxon>Burkholderiaceae</taxon>
        <taxon>Burkholderia</taxon>
        <taxon>pseudomallei group</taxon>
    </lineage>
</organism>
<proteinExistence type="inferred from homology"/>
<comment type="function">
    <text evidence="1">Catalyzes the reduction of the glycolytic intermediate dihydroxyacetone phosphate (DHAP) to sn-glycerol 3-phosphate (G3P), the key precursor for phospholipid synthesis.</text>
</comment>
<comment type="catalytic activity">
    <reaction evidence="1">
        <text>sn-glycerol 3-phosphate + NAD(+) = dihydroxyacetone phosphate + NADH + H(+)</text>
        <dbReference type="Rhea" id="RHEA:11092"/>
        <dbReference type="ChEBI" id="CHEBI:15378"/>
        <dbReference type="ChEBI" id="CHEBI:57540"/>
        <dbReference type="ChEBI" id="CHEBI:57597"/>
        <dbReference type="ChEBI" id="CHEBI:57642"/>
        <dbReference type="ChEBI" id="CHEBI:57945"/>
        <dbReference type="EC" id="1.1.1.94"/>
    </reaction>
    <physiologicalReaction direction="right-to-left" evidence="1">
        <dbReference type="Rhea" id="RHEA:11094"/>
    </physiologicalReaction>
</comment>
<comment type="catalytic activity">
    <reaction evidence="1">
        <text>sn-glycerol 3-phosphate + NADP(+) = dihydroxyacetone phosphate + NADPH + H(+)</text>
        <dbReference type="Rhea" id="RHEA:11096"/>
        <dbReference type="ChEBI" id="CHEBI:15378"/>
        <dbReference type="ChEBI" id="CHEBI:57597"/>
        <dbReference type="ChEBI" id="CHEBI:57642"/>
        <dbReference type="ChEBI" id="CHEBI:57783"/>
        <dbReference type="ChEBI" id="CHEBI:58349"/>
        <dbReference type="EC" id="1.1.1.94"/>
    </reaction>
    <physiologicalReaction direction="right-to-left" evidence="1">
        <dbReference type="Rhea" id="RHEA:11098"/>
    </physiologicalReaction>
</comment>
<comment type="pathway">
    <text evidence="1">Membrane lipid metabolism; glycerophospholipid metabolism.</text>
</comment>
<comment type="subcellular location">
    <subcellularLocation>
        <location evidence="1">Cytoplasm</location>
    </subcellularLocation>
</comment>
<comment type="similarity">
    <text evidence="1">Belongs to the NAD-dependent glycerol-3-phosphate dehydrogenase family.</text>
</comment>
<sequence>MKVAVLGAGAWGTALAAHLAVRHDTLLWARDAALVAELAARRENARYLGGVALPPGLRYEADLATALSHAQADDALCVIAAPVAGLRALCRAMRDARRVPAHFVWVCKGFEADTRRLPHQMVAEELPDHASYGVLSGPSFAREVAQGLPVALTVASASAACRERTLAAFHHGAMRIYTGDDVVGVEVGGAVKNVLAIATGIADGLGLGLNARAALVTRGLAEMSRLGVALGGRAETFTGLTGLGDLILTATGDLSRNRSVGLQLAAGRSLDDILAALGHVAEGVRCARAVLSIARERGVDMPITEAVCAVLFDGVAPRDAVSGLLRRDAKAE</sequence>
<feature type="chain" id="PRO_0000137937" description="Glycerol-3-phosphate dehydrogenase [NAD(P)+]">
    <location>
        <begin position="1"/>
        <end position="332"/>
    </location>
</feature>
<feature type="active site" description="Proton acceptor" evidence="1">
    <location>
        <position position="192"/>
    </location>
</feature>
<feature type="binding site" evidence="1">
    <location>
        <position position="11"/>
    </location>
    <ligand>
        <name>NADPH</name>
        <dbReference type="ChEBI" id="CHEBI:57783"/>
    </ligand>
</feature>
<feature type="binding site" evidence="1">
    <location>
        <position position="30"/>
    </location>
    <ligand>
        <name>NADPH</name>
        <dbReference type="ChEBI" id="CHEBI:57783"/>
    </ligand>
</feature>
<feature type="binding site" evidence="1">
    <location>
        <position position="108"/>
    </location>
    <ligand>
        <name>NADPH</name>
        <dbReference type="ChEBI" id="CHEBI:57783"/>
    </ligand>
</feature>
<feature type="binding site" evidence="1">
    <location>
        <position position="108"/>
    </location>
    <ligand>
        <name>sn-glycerol 3-phosphate</name>
        <dbReference type="ChEBI" id="CHEBI:57597"/>
    </ligand>
</feature>
<feature type="binding site" evidence="1">
    <location>
        <position position="137"/>
    </location>
    <ligand>
        <name>sn-glycerol 3-phosphate</name>
        <dbReference type="ChEBI" id="CHEBI:57597"/>
    </ligand>
</feature>
<feature type="binding site" evidence="1">
    <location>
        <position position="139"/>
    </location>
    <ligand>
        <name>sn-glycerol 3-phosphate</name>
        <dbReference type="ChEBI" id="CHEBI:57597"/>
    </ligand>
</feature>
<feature type="binding site" evidence="1">
    <location>
        <position position="141"/>
    </location>
    <ligand>
        <name>NADPH</name>
        <dbReference type="ChEBI" id="CHEBI:57783"/>
    </ligand>
</feature>
<feature type="binding site" evidence="1">
    <location>
        <position position="192"/>
    </location>
    <ligand>
        <name>sn-glycerol 3-phosphate</name>
        <dbReference type="ChEBI" id="CHEBI:57597"/>
    </ligand>
</feature>
<feature type="binding site" evidence="1">
    <location>
        <position position="245"/>
    </location>
    <ligand>
        <name>sn-glycerol 3-phosphate</name>
        <dbReference type="ChEBI" id="CHEBI:57597"/>
    </ligand>
</feature>
<feature type="binding site" evidence="1">
    <location>
        <position position="255"/>
    </location>
    <ligand>
        <name>sn-glycerol 3-phosphate</name>
        <dbReference type="ChEBI" id="CHEBI:57597"/>
    </ligand>
</feature>
<feature type="binding site" evidence="1">
    <location>
        <position position="256"/>
    </location>
    <ligand>
        <name>NADPH</name>
        <dbReference type="ChEBI" id="CHEBI:57783"/>
    </ligand>
</feature>
<feature type="binding site" evidence="1">
    <location>
        <position position="256"/>
    </location>
    <ligand>
        <name>sn-glycerol 3-phosphate</name>
        <dbReference type="ChEBI" id="CHEBI:57597"/>
    </ligand>
</feature>
<feature type="binding site" evidence="1">
    <location>
        <position position="257"/>
    </location>
    <ligand>
        <name>sn-glycerol 3-phosphate</name>
        <dbReference type="ChEBI" id="CHEBI:57597"/>
    </ligand>
</feature>
<feature type="binding site" evidence="1">
    <location>
        <position position="280"/>
    </location>
    <ligand>
        <name>NADPH</name>
        <dbReference type="ChEBI" id="CHEBI:57783"/>
    </ligand>
</feature>
<feature type="binding site" evidence="1">
    <location>
        <position position="282"/>
    </location>
    <ligand>
        <name>NADPH</name>
        <dbReference type="ChEBI" id="CHEBI:57783"/>
    </ligand>
</feature>
<protein>
    <recommendedName>
        <fullName evidence="1">Glycerol-3-phosphate dehydrogenase [NAD(P)+]</fullName>
        <ecNumber evidence="1">1.1.1.94</ecNumber>
    </recommendedName>
    <alternativeName>
        <fullName evidence="1">NAD(P)(+)-dependent glycerol-3-phosphate dehydrogenase</fullName>
    </alternativeName>
    <alternativeName>
        <fullName evidence="1">NAD(P)H-dependent dihydroxyacetone-phosphate reductase</fullName>
    </alternativeName>
</protein>
<dbReference type="EC" id="1.1.1.94" evidence="1"/>
<dbReference type="EMBL" id="BX571965">
    <property type="protein sequence ID" value="CAH34435.1"/>
    <property type="molecule type" value="Genomic_DNA"/>
</dbReference>
<dbReference type="RefSeq" id="WP_004536061.1">
    <property type="nucleotide sequence ID" value="NZ_CP009538.1"/>
</dbReference>
<dbReference type="RefSeq" id="YP_107072.1">
    <property type="nucleotide sequence ID" value="NC_006350.1"/>
</dbReference>
<dbReference type="SMR" id="Q63XU3"/>
<dbReference type="STRING" id="272560.BPSL0447"/>
<dbReference type="KEGG" id="bps:BPSL0447"/>
<dbReference type="PATRIC" id="fig|272560.51.peg.1211"/>
<dbReference type="eggNOG" id="COG0240">
    <property type="taxonomic scope" value="Bacteria"/>
</dbReference>
<dbReference type="UniPathway" id="UPA00940"/>
<dbReference type="Proteomes" id="UP000000605">
    <property type="component" value="Chromosome 1"/>
</dbReference>
<dbReference type="GO" id="GO:0005829">
    <property type="term" value="C:cytosol"/>
    <property type="evidence" value="ECO:0007669"/>
    <property type="project" value="TreeGrafter"/>
</dbReference>
<dbReference type="GO" id="GO:0047952">
    <property type="term" value="F:glycerol-3-phosphate dehydrogenase [NAD(P)+] activity"/>
    <property type="evidence" value="ECO:0007669"/>
    <property type="project" value="UniProtKB-UniRule"/>
</dbReference>
<dbReference type="GO" id="GO:0051287">
    <property type="term" value="F:NAD binding"/>
    <property type="evidence" value="ECO:0007669"/>
    <property type="project" value="InterPro"/>
</dbReference>
<dbReference type="GO" id="GO:0005975">
    <property type="term" value="P:carbohydrate metabolic process"/>
    <property type="evidence" value="ECO:0007669"/>
    <property type="project" value="InterPro"/>
</dbReference>
<dbReference type="GO" id="GO:0046167">
    <property type="term" value="P:glycerol-3-phosphate biosynthetic process"/>
    <property type="evidence" value="ECO:0007669"/>
    <property type="project" value="UniProtKB-UniRule"/>
</dbReference>
<dbReference type="GO" id="GO:0046168">
    <property type="term" value="P:glycerol-3-phosphate catabolic process"/>
    <property type="evidence" value="ECO:0007669"/>
    <property type="project" value="InterPro"/>
</dbReference>
<dbReference type="GO" id="GO:0006650">
    <property type="term" value="P:glycerophospholipid metabolic process"/>
    <property type="evidence" value="ECO:0007669"/>
    <property type="project" value="UniProtKB-UniRule"/>
</dbReference>
<dbReference type="GO" id="GO:0008654">
    <property type="term" value="P:phospholipid biosynthetic process"/>
    <property type="evidence" value="ECO:0007669"/>
    <property type="project" value="UniProtKB-KW"/>
</dbReference>
<dbReference type="FunFam" id="1.10.1040.10:FF:000001">
    <property type="entry name" value="Glycerol-3-phosphate dehydrogenase [NAD(P)+]"/>
    <property type="match status" value="1"/>
</dbReference>
<dbReference type="FunFam" id="3.40.50.720:FF:000019">
    <property type="entry name" value="Glycerol-3-phosphate dehydrogenase [NAD(P)+]"/>
    <property type="match status" value="1"/>
</dbReference>
<dbReference type="Gene3D" id="1.10.1040.10">
    <property type="entry name" value="N-(1-d-carboxylethyl)-l-norvaline Dehydrogenase, domain 2"/>
    <property type="match status" value="1"/>
</dbReference>
<dbReference type="Gene3D" id="3.40.50.720">
    <property type="entry name" value="NAD(P)-binding Rossmann-like Domain"/>
    <property type="match status" value="1"/>
</dbReference>
<dbReference type="HAMAP" id="MF_00394">
    <property type="entry name" value="NAD_Glyc3P_dehydrog"/>
    <property type="match status" value="1"/>
</dbReference>
<dbReference type="InterPro" id="IPR008927">
    <property type="entry name" value="6-PGluconate_DH-like_C_sf"/>
</dbReference>
<dbReference type="InterPro" id="IPR013328">
    <property type="entry name" value="6PGD_dom2"/>
</dbReference>
<dbReference type="InterPro" id="IPR006168">
    <property type="entry name" value="G3P_DH_NAD-dep"/>
</dbReference>
<dbReference type="InterPro" id="IPR006109">
    <property type="entry name" value="G3P_DH_NAD-dep_C"/>
</dbReference>
<dbReference type="InterPro" id="IPR011128">
    <property type="entry name" value="G3P_DH_NAD-dep_N"/>
</dbReference>
<dbReference type="InterPro" id="IPR036291">
    <property type="entry name" value="NAD(P)-bd_dom_sf"/>
</dbReference>
<dbReference type="NCBIfam" id="NF000940">
    <property type="entry name" value="PRK00094.1-2"/>
    <property type="match status" value="1"/>
</dbReference>
<dbReference type="NCBIfam" id="NF000942">
    <property type="entry name" value="PRK00094.1-4"/>
    <property type="match status" value="1"/>
</dbReference>
<dbReference type="PANTHER" id="PTHR11728">
    <property type="entry name" value="GLYCEROL-3-PHOSPHATE DEHYDROGENASE"/>
    <property type="match status" value="1"/>
</dbReference>
<dbReference type="PANTHER" id="PTHR11728:SF1">
    <property type="entry name" value="GLYCEROL-3-PHOSPHATE DEHYDROGENASE [NAD(+)] 2, CHLOROPLASTIC"/>
    <property type="match status" value="1"/>
</dbReference>
<dbReference type="Pfam" id="PF07479">
    <property type="entry name" value="NAD_Gly3P_dh_C"/>
    <property type="match status" value="1"/>
</dbReference>
<dbReference type="Pfam" id="PF01210">
    <property type="entry name" value="NAD_Gly3P_dh_N"/>
    <property type="match status" value="1"/>
</dbReference>
<dbReference type="PIRSF" id="PIRSF000114">
    <property type="entry name" value="Glycerol-3-P_dh"/>
    <property type="match status" value="1"/>
</dbReference>
<dbReference type="PRINTS" id="PR00077">
    <property type="entry name" value="GPDHDRGNASE"/>
</dbReference>
<dbReference type="SUPFAM" id="SSF48179">
    <property type="entry name" value="6-phosphogluconate dehydrogenase C-terminal domain-like"/>
    <property type="match status" value="1"/>
</dbReference>
<dbReference type="SUPFAM" id="SSF51735">
    <property type="entry name" value="NAD(P)-binding Rossmann-fold domains"/>
    <property type="match status" value="1"/>
</dbReference>
<dbReference type="PROSITE" id="PS00957">
    <property type="entry name" value="NAD_G3PDH"/>
    <property type="match status" value="1"/>
</dbReference>
<evidence type="ECO:0000255" key="1">
    <source>
        <dbReference type="HAMAP-Rule" id="MF_00394"/>
    </source>
</evidence>
<name>GPDA_BURPS</name>
<accession>Q63XU3</accession>